<proteinExistence type="inferred from homology"/>
<evidence type="ECO:0000255" key="1">
    <source>
        <dbReference type="HAMAP-Rule" id="MF_01547"/>
    </source>
</evidence>
<reference key="1">
    <citation type="submission" date="2007-02" db="EMBL/GenBank/DDBJ databases">
        <title>Complete sequence of chromosome 1 of Rhodobacter sphaeroides ATCC 17029.</title>
        <authorList>
            <person name="Copeland A."/>
            <person name="Lucas S."/>
            <person name="Lapidus A."/>
            <person name="Barry K."/>
            <person name="Detter J.C."/>
            <person name="Glavina del Rio T."/>
            <person name="Hammon N."/>
            <person name="Israni S."/>
            <person name="Dalin E."/>
            <person name="Tice H."/>
            <person name="Pitluck S."/>
            <person name="Kiss H."/>
            <person name="Brettin T."/>
            <person name="Bruce D."/>
            <person name="Han C."/>
            <person name="Tapia R."/>
            <person name="Gilna P."/>
            <person name="Schmutz J."/>
            <person name="Larimer F."/>
            <person name="Land M."/>
            <person name="Hauser L."/>
            <person name="Kyrpides N."/>
            <person name="Mikhailova N."/>
            <person name="Richardson P."/>
            <person name="Mackenzie C."/>
            <person name="Choudhary M."/>
            <person name="Donohue T.J."/>
            <person name="Kaplan S."/>
        </authorList>
    </citation>
    <scope>NUCLEOTIDE SEQUENCE [LARGE SCALE GENOMIC DNA]</scope>
    <source>
        <strain>ATCC 17029 / ATH 2.4.9</strain>
    </source>
</reference>
<protein>
    <recommendedName>
        <fullName evidence="1">Ribosomal RNA large subunit methyltransferase E</fullName>
        <ecNumber evidence="1">2.1.1.166</ecNumber>
    </recommendedName>
    <alternativeName>
        <fullName evidence="1">23S rRNA Um2552 methyltransferase</fullName>
    </alternativeName>
    <alternativeName>
        <fullName evidence="1">rRNA (uridine-2'-O-)-methyltransferase</fullName>
    </alternativeName>
</protein>
<dbReference type="EC" id="2.1.1.166" evidence="1"/>
<dbReference type="EMBL" id="CP000577">
    <property type="protein sequence ID" value="ABN76524.1"/>
    <property type="molecule type" value="Genomic_DNA"/>
</dbReference>
<dbReference type="RefSeq" id="WP_002719925.1">
    <property type="nucleotide sequence ID" value="NC_009049.1"/>
</dbReference>
<dbReference type="SMR" id="A3PJK8"/>
<dbReference type="KEGG" id="rsh:Rsph17029_1414"/>
<dbReference type="HOGENOM" id="CLU_009422_4_0_5"/>
<dbReference type="GO" id="GO:0005737">
    <property type="term" value="C:cytoplasm"/>
    <property type="evidence" value="ECO:0007669"/>
    <property type="project" value="UniProtKB-SubCell"/>
</dbReference>
<dbReference type="GO" id="GO:0008650">
    <property type="term" value="F:rRNA (uridine-2'-O-)-methyltransferase activity"/>
    <property type="evidence" value="ECO:0007669"/>
    <property type="project" value="UniProtKB-UniRule"/>
</dbReference>
<dbReference type="Gene3D" id="3.40.50.150">
    <property type="entry name" value="Vaccinia Virus protein VP39"/>
    <property type="match status" value="1"/>
</dbReference>
<dbReference type="HAMAP" id="MF_01547">
    <property type="entry name" value="RNA_methyltr_E"/>
    <property type="match status" value="1"/>
</dbReference>
<dbReference type="InterPro" id="IPR050082">
    <property type="entry name" value="RNA_methyltr_RlmE"/>
</dbReference>
<dbReference type="InterPro" id="IPR002877">
    <property type="entry name" value="RNA_MeTrfase_FtsJ_dom"/>
</dbReference>
<dbReference type="InterPro" id="IPR015507">
    <property type="entry name" value="rRNA-MeTfrase_E"/>
</dbReference>
<dbReference type="InterPro" id="IPR029063">
    <property type="entry name" value="SAM-dependent_MTases_sf"/>
</dbReference>
<dbReference type="PANTHER" id="PTHR10920">
    <property type="entry name" value="RIBOSOMAL RNA METHYLTRANSFERASE"/>
    <property type="match status" value="1"/>
</dbReference>
<dbReference type="PANTHER" id="PTHR10920:SF18">
    <property type="entry name" value="RRNA METHYLTRANSFERASE 2, MITOCHONDRIAL"/>
    <property type="match status" value="1"/>
</dbReference>
<dbReference type="Pfam" id="PF01728">
    <property type="entry name" value="FtsJ"/>
    <property type="match status" value="1"/>
</dbReference>
<dbReference type="PIRSF" id="PIRSF005461">
    <property type="entry name" value="23S_rRNA_mtase"/>
    <property type="match status" value="1"/>
</dbReference>
<dbReference type="SUPFAM" id="SSF53335">
    <property type="entry name" value="S-adenosyl-L-methionine-dependent methyltransferases"/>
    <property type="match status" value="1"/>
</dbReference>
<gene>
    <name evidence="1" type="primary">rlmE</name>
    <name evidence="1" type="synonym">ftsJ</name>
    <name evidence="1" type="synonym">rrmJ</name>
    <name type="ordered locus">Rsph17029_1414</name>
</gene>
<comment type="function">
    <text evidence="1">Specifically methylates the uridine in position 2552 of 23S rRNA at the 2'-O position of the ribose in the fully assembled 50S ribosomal subunit.</text>
</comment>
<comment type="catalytic activity">
    <reaction evidence="1">
        <text>uridine(2552) in 23S rRNA + S-adenosyl-L-methionine = 2'-O-methyluridine(2552) in 23S rRNA + S-adenosyl-L-homocysteine + H(+)</text>
        <dbReference type="Rhea" id="RHEA:42720"/>
        <dbReference type="Rhea" id="RHEA-COMP:10202"/>
        <dbReference type="Rhea" id="RHEA-COMP:10203"/>
        <dbReference type="ChEBI" id="CHEBI:15378"/>
        <dbReference type="ChEBI" id="CHEBI:57856"/>
        <dbReference type="ChEBI" id="CHEBI:59789"/>
        <dbReference type="ChEBI" id="CHEBI:65315"/>
        <dbReference type="ChEBI" id="CHEBI:74478"/>
        <dbReference type="EC" id="2.1.1.166"/>
    </reaction>
</comment>
<comment type="subcellular location">
    <subcellularLocation>
        <location evidence="1">Cytoplasm</location>
    </subcellularLocation>
</comment>
<comment type="similarity">
    <text evidence="1">Belongs to the class I-like SAM-binding methyltransferase superfamily. RNA methyltransferase RlmE family.</text>
</comment>
<sequence>MTTKNTSGRGQRELRVRVKTAKGRKLSSTLWLERQLNDPYVIRAKKEGYRGRAAYKILELDDKFGFLKPGGRVVDLGCAPGGWCQVAVERVNALGQRKNKPEGTVLGVDLQEVEPISGAEIHQLDFLSDDADEKVKGWLGGRADVVMSDMAAAASGHKGTDHLRIIALCEAAAAFAFDVLEEGGTFVAKVLAGGAENELQALLKKNFTKVANVKPPASRADSSEKFVVAMGFRGRASEPEEGEA</sequence>
<keyword id="KW-0963">Cytoplasm</keyword>
<keyword id="KW-0489">Methyltransferase</keyword>
<keyword id="KW-0698">rRNA processing</keyword>
<keyword id="KW-0949">S-adenosyl-L-methionine</keyword>
<keyword id="KW-0808">Transferase</keyword>
<feature type="chain" id="PRO_0000300598" description="Ribosomal RNA large subunit methyltransferase E">
    <location>
        <begin position="1"/>
        <end position="244"/>
    </location>
</feature>
<feature type="active site" description="Proton acceptor" evidence="1">
    <location>
        <position position="189"/>
    </location>
</feature>
<feature type="binding site" evidence="1">
    <location>
        <position position="81"/>
    </location>
    <ligand>
        <name>S-adenosyl-L-methionine</name>
        <dbReference type="ChEBI" id="CHEBI:59789"/>
    </ligand>
</feature>
<feature type="binding site" evidence="1">
    <location>
        <position position="83"/>
    </location>
    <ligand>
        <name>S-adenosyl-L-methionine</name>
        <dbReference type="ChEBI" id="CHEBI:59789"/>
    </ligand>
</feature>
<feature type="binding site" evidence="1">
    <location>
        <position position="109"/>
    </location>
    <ligand>
        <name>S-adenosyl-L-methionine</name>
        <dbReference type="ChEBI" id="CHEBI:59789"/>
    </ligand>
</feature>
<feature type="binding site" evidence="1">
    <location>
        <position position="125"/>
    </location>
    <ligand>
        <name>S-adenosyl-L-methionine</name>
        <dbReference type="ChEBI" id="CHEBI:59789"/>
    </ligand>
</feature>
<feature type="binding site" evidence="1">
    <location>
        <position position="149"/>
    </location>
    <ligand>
        <name>S-adenosyl-L-methionine</name>
        <dbReference type="ChEBI" id="CHEBI:59789"/>
    </ligand>
</feature>
<organism>
    <name type="scientific">Cereibacter sphaeroides (strain ATCC 17029 / ATH 2.4.9)</name>
    <name type="common">Rhodobacter sphaeroides</name>
    <dbReference type="NCBI Taxonomy" id="349101"/>
    <lineage>
        <taxon>Bacteria</taxon>
        <taxon>Pseudomonadati</taxon>
        <taxon>Pseudomonadota</taxon>
        <taxon>Alphaproteobacteria</taxon>
        <taxon>Rhodobacterales</taxon>
        <taxon>Paracoccaceae</taxon>
        <taxon>Cereibacter</taxon>
    </lineage>
</organism>
<accession>A3PJK8</accession>
<name>RLME_CERS1</name>